<keyword id="KW-0067">ATP-binding</keyword>
<keyword id="KW-0547">Nucleotide-binding</keyword>
<keyword id="KW-0614">Plasmid</keyword>
<organism>
    <name type="scientific">Streptomyces azureus</name>
    <dbReference type="NCBI Taxonomy" id="146537"/>
    <lineage>
        <taxon>Bacteria</taxon>
        <taxon>Bacillati</taxon>
        <taxon>Actinomycetota</taxon>
        <taxon>Actinomycetes</taxon>
        <taxon>Kitasatosporales</taxon>
        <taxon>Streptomycetaceae</taxon>
        <taxon>Streptomyces</taxon>
    </lineage>
</organism>
<name>SPI_STRAJ</name>
<dbReference type="EMBL" id="S58719">
    <property type="protein sequence ID" value="AAC60434.1"/>
    <property type="molecule type" value="Genomic_DNA"/>
</dbReference>
<dbReference type="PIR" id="JC1485">
    <property type="entry name" value="JC1485"/>
</dbReference>
<dbReference type="SMR" id="Q53308"/>
<dbReference type="GO" id="GO:0005524">
    <property type="term" value="F:ATP binding"/>
    <property type="evidence" value="ECO:0007669"/>
    <property type="project" value="UniProtKB-KW"/>
</dbReference>
<dbReference type="GO" id="GO:0003677">
    <property type="term" value="F:DNA binding"/>
    <property type="evidence" value="ECO:0007669"/>
    <property type="project" value="InterPro"/>
</dbReference>
<dbReference type="Gene3D" id="3.40.50.300">
    <property type="entry name" value="P-loop containing nucleotide triphosphate hydrolases"/>
    <property type="match status" value="1"/>
</dbReference>
<dbReference type="InterPro" id="IPR050206">
    <property type="entry name" value="FtsK/SpoIIIE/SftA"/>
</dbReference>
<dbReference type="InterPro" id="IPR002543">
    <property type="entry name" value="FtsK_dom"/>
</dbReference>
<dbReference type="InterPro" id="IPR027417">
    <property type="entry name" value="P-loop_NTPase"/>
</dbReference>
<dbReference type="PANTHER" id="PTHR22683:SF41">
    <property type="entry name" value="DNA TRANSLOCASE FTSK"/>
    <property type="match status" value="1"/>
</dbReference>
<dbReference type="PANTHER" id="PTHR22683">
    <property type="entry name" value="SPORULATION PROTEIN RELATED"/>
    <property type="match status" value="1"/>
</dbReference>
<dbReference type="Pfam" id="PF01580">
    <property type="entry name" value="FtsK_SpoIIIE"/>
    <property type="match status" value="2"/>
</dbReference>
<dbReference type="SUPFAM" id="SSF52540">
    <property type="entry name" value="P-loop containing nucleoside triphosphate hydrolases"/>
    <property type="match status" value="1"/>
</dbReference>
<dbReference type="PROSITE" id="PS50901">
    <property type="entry name" value="FTSK"/>
    <property type="match status" value="1"/>
</dbReference>
<accession>Q53308</accession>
<gene>
    <name type="primary">spi</name>
</gene>
<evidence type="ECO:0000255" key="1">
    <source>
        <dbReference type="PROSITE-ProRule" id="PRU00289"/>
    </source>
</evidence>
<protein>
    <recommendedName>
        <fullName>Sporulation regulatory protein</fullName>
    </recommendedName>
</protein>
<proteinExistence type="predicted"/>
<reference key="1">
    <citation type="journal article" date="1993" name="Biosci. Biotechnol. Biochem.">
        <title>Sporulation-inhibitory gene in pock-forming plasmid pSA1.1 of Streptomyces azureus.</title>
        <authorList>
            <person name="Tomura T."/>
            <person name="Kishino H."/>
            <person name="Doi K."/>
            <person name="Hara T."/>
            <person name="Kuhara S."/>
            <person name="Ogata S."/>
        </authorList>
    </citation>
    <scope>NUCLEOTIDE SEQUENCE [GENOMIC DNA]</scope>
    <source>
        <strain>ATCC 14921 / DSM 40106 / CBS 467.68 / ETH 28555 / JCM 4564 / NBRC 12744 / NRRL B-2655 / VKM Ac-719</strain>
    </source>
</reference>
<sequence>MTCCAGCGSAARPARMAWRSGRCARTGRLRAGLRKAPMALTLGANHSGKSMYQRNLIKGLAQLPVALVGIDCKRGVEQAAFAPRLSALVTTPDDAASLLGVLVAEMEGRFDLLSRHGVSDLWELPAEVRPVPVVVLVDEVAELFLISSKKDEERRERIVTALIRLAQMARAIGIHLEICGQRFGSDLGKGATMLRAQLTGRVVHRVNDKQTAEMGLADVAPDAVPAASLIPMNRPGTAVAADPSGGWSKIRTPETSRDEVVAVCREFAHLIPDLPFLEPFRPRVPAEVPAAGPSMVKPRPLTE</sequence>
<comment type="function">
    <text>Involved in sporulation inhibition and pock formation.</text>
</comment>
<geneLocation type="plasmid">
    <name>pSA1.1</name>
</geneLocation>
<feature type="chain" id="PRO_0000098327" description="Sporulation regulatory protein">
    <location>
        <begin position="1"/>
        <end position="303"/>
    </location>
</feature>
<feature type="domain" description="FtsK" evidence="1">
    <location>
        <begin position="26"/>
        <end position="213"/>
    </location>
</feature>
<feature type="binding site" evidence="1">
    <location>
        <begin position="43"/>
        <end position="50"/>
    </location>
    <ligand>
        <name>ATP</name>
        <dbReference type="ChEBI" id="CHEBI:30616"/>
    </ligand>
</feature>